<comment type="function">
    <text evidence="1">DNA-dependent RNA polymerase catalyzes the transcription of DNA into RNA using the four ribonucleoside triphosphates as substrates.</text>
</comment>
<comment type="catalytic activity">
    <reaction evidence="1">
        <text>RNA(n) + a ribonucleoside 5'-triphosphate = RNA(n+1) + diphosphate</text>
        <dbReference type="Rhea" id="RHEA:21248"/>
        <dbReference type="Rhea" id="RHEA-COMP:14527"/>
        <dbReference type="Rhea" id="RHEA-COMP:17342"/>
        <dbReference type="ChEBI" id="CHEBI:33019"/>
        <dbReference type="ChEBI" id="CHEBI:61557"/>
        <dbReference type="ChEBI" id="CHEBI:140395"/>
        <dbReference type="EC" id="2.7.7.6"/>
    </reaction>
</comment>
<comment type="cofactor">
    <cofactor evidence="1">
        <name>Mg(2+)</name>
        <dbReference type="ChEBI" id="CHEBI:18420"/>
    </cofactor>
    <text evidence="1">Binds 1 Mg(2+) ion per subunit.</text>
</comment>
<comment type="cofactor">
    <cofactor evidence="1">
        <name>Zn(2+)</name>
        <dbReference type="ChEBI" id="CHEBI:29105"/>
    </cofactor>
    <text evidence="1">Binds 1 Zn(2+) ion1 per subunit.</text>
</comment>
<comment type="subunit">
    <text evidence="1">The RNAP catalytic core consists of 2 alpha, 1 beta, 1 beta' and 1 omega subunit. When a sigma factor is associated with the core the holoenzyme is formed, which can initiate transcription.</text>
</comment>
<comment type="similarity">
    <text evidence="1 2">Belongs to the RNA polymerase beta' chain family.</text>
</comment>
<organism>
    <name type="scientific">Weissella paramesenteroides</name>
    <name type="common">Leuconostoc paramesenteroides</name>
    <dbReference type="NCBI Taxonomy" id="1249"/>
    <lineage>
        <taxon>Bacteria</taxon>
        <taxon>Bacillati</taxon>
        <taxon>Bacillota</taxon>
        <taxon>Bacilli</taxon>
        <taxon>Lactobacillales</taxon>
        <taxon>Lactobacillaceae</taxon>
        <taxon>Weissella</taxon>
    </lineage>
</organism>
<reference key="1">
    <citation type="journal article" date="1996" name="Int. J. Syst. Bacteriol.">
        <title>Analysis of the beta' subunit of DNA-dependent RNA polymerase does not support the hypothesis inferred from 16S rRNA analysis that Oenococcus oeni (formerly Leuconostoc oenos) is a tachytelic (fast-evolving) bacterium.</title>
        <authorList>
            <person name="Morse R."/>
            <person name="Collins M.D."/>
            <person name="O'Hanlon K."/>
            <person name="Wallbanks S."/>
            <person name="Richardson P.T."/>
        </authorList>
    </citation>
    <scope>NUCLEOTIDE SEQUENCE [GENOMIC DNA]</scope>
    <source>
        <strain>ATCC 33313 / DSM 20288 / JCM 9890 / CCUG 30068 / LMG 9852 / NBRC 109620 / NCDO 803 / NCIMB 13092 / NRRL B-3471 / R80</strain>
    </source>
</reference>
<gene>
    <name evidence="1" type="primary">rpoC</name>
</gene>
<proteinExistence type="inferred from homology"/>
<name>RPOC_WEIPA</name>
<sequence>RIRYKGIVCDRCGVEVTSAKVRRERMGHIELAAPVSHIWYFKGIPSRMGLVLDMSPRSLEEIIYFASYVVTKGGDTPLTEKQLLSEREYRELKAEYGNAFEAGMGAEAVQTLLANVDLEEEVTELKAELREATGQKRVRAVRRLDIIEAFVKSGNKPEWMVMDVIPIIPPDLRPMVQLEGGRFATSDLNDLYRRVINRNNRLKRLLELNAPGIIVQNEKRMLQEAADALVDNGRRGRPVTGPGNRPLKSLSHMLKGKQGRFRQNLLGKRVDYSGRSVIDVGPFLKMNQMGLPRQMAMELFRPFIMKELVKRDLAGNIRAAKRKIDRRDDDVMDVLEDVIKEHPVLLNRAPTLHRLGIQAFEPVLVSGKAMRLHPLVTEAYNADFDGDQMAIHVPLSDEAQAEARLLMLAAGHILAPKDGKPIVAPSQDMVIGNYYLTTEEAGREGEGMIFKDVNEVRTAYQNKYVHLHTRIGIQTSSLPAAKPFTAEQRSRIMLTSVGKLFFNDILPEDFPFLNEPTEANLHEIDNRFFLEPGEDIKAHYAETPILPPFKKGYLSDIIAEVYKIYKVTETSLLLDRMKDLGYDESTKSGLTVGVSDVTDLKEKPEIIADAHKQVATVTKQFRRGLITDSERYERVIAIWNKAKDDITEKLIEHFEPDNNIFMMSDSGARGNISNFTQLAGMRGLMAAPNGRIMELPIIANFREGLSVLEMFFSTHGARKGMTDTALKTADSGYMTRRLVDVAQDVIIRELDCHSDRGLDVTAIMNGNEVIEPLYERILGRYAQKSVFDPETGETLVNHNEMITEDIAKRIIEAGITTVTIRSAFTCNTEHGVCVRCYGRNMATGDVVEVGEAVGTVAAQSIGEPGTQLTMRTFHTGGVAGNDITQGLPRVQEIFEARNPKGRAMITEVTGEVTSIEENPADRTKEVTIQGETDTRTYTLPMTARMRVGEGDRIHRGETLNEGSADPKEIIQVRDTLATENYIVHEVQKVYRMQGVEISDKHIEVMARQMLRKVRVMDPGETDLLPGTLMDIAQFRDANEDTLLKGGLPATGRPV</sequence>
<evidence type="ECO:0000255" key="1">
    <source>
        <dbReference type="HAMAP-Rule" id="MF_01322"/>
    </source>
</evidence>
<evidence type="ECO:0000305" key="2"/>
<accession>P96178</accession>
<feature type="chain" id="PRO_0000067832" description="DNA-directed RNA polymerase subunit beta'">
    <location>
        <begin position="1" status="less than"/>
        <end position="1054" status="greater than"/>
    </location>
</feature>
<feature type="binding site" evidence="1">
    <location>
        <position position="383"/>
    </location>
    <ligand>
        <name>Mg(2+)</name>
        <dbReference type="ChEBI" id="CHEBI:18420"/>
    </ligand>
</feature>
<feature type="binding site" evidence="1">
    <location>
        <position position="385"/>
    </location>
    <ligand>
        <name>Mg(2+)</name>
        <dbReference type="ChEBI" id="CHEBI:18420"/>
    </ligand>
</feature>
<feature type="binding site" evidence="1">
    <location>
        <position position="387"/>
    </location>
    <ligand>
        <name>Mg(2+)</name>
        <dbReference type="ChEBI" id="CHEBI:18420"/>
    </ligand>
</feature>
<feature type="binding site" evidence="1">
    <location>
        <position position="752"/>
    </location>
    <ligand>
        <name>Zn(2+)</name>
        <dbReference type="ChEBI" id="CHEBI:29105"/>
    </ligand>
</feature>
<feature type="binding site" evidence="1">
    <location>
        <position position="826"/>
    </location>
    <ligand>
        <name>Zn(2+)</name>
        <dbReference type="ChEBI" id="CHEBI:29105"/>
    </ligand>
</feature>
<feature type="binding site" evidence="1">
    <location>
        <position position="833"/>
    </location>
    <ligand>
        <name>Zn(2+)</name>
        <dbReference type="ChEBI" id="CHEBI:29105"/>
    </ligand>
</feature>
<feature type="binding site" evidence="1">
    <location>
        <position position="836"/>
    </location>
    <ligand>
        <name>Zn(2+)</name>
        <dbReference type="ChEBI" id="CHEBI:29105"/>
    </ligand>
</feature>
<feature type="non-terminal residue">
    <location>
        <position position="1"/>
    </location>
</feature>
<feature type="non-terminal residue">
    <location>
        <position position="1054"/>
    </location>
</feature>
<protein>
    <recommendedName>
        <fullName evidence="1">DNA-directed RNA polymerase subunit beta'</fullName>
        <shortName evidence="1">RNAP subunit beta'</shortName>
        <ecNumber evidence="1">2.7.7.6</ecNumber>
    </recommendedName>
    <alternativeName>
        <fullName evidence="1">RNA polymerase subunit beta'</fullName>
    </alternativeName>
    <alternativeName>
        <fullName evidence="1">Transcriptase subunit beta'</fullName>
    </alternativeName>
</protein>
<keyword id="KW-0240">DNA-directed RNA polymerase</keyword>
<keyword id="KW-0460">Magnesium</keyword>
<keyword id="KW-0479">Metal-binding</keyword>
<keyword id="KW-0548">Nucleotidyltransferase</keyword>
<keyword id="KW-0804">Transcription</keyword>
<keyword id="KW-0808">Transferase</keyword>
<keyword id="KW-0862">Zinc</keyword>
<dbReference type="EC" id="2.7.7.6" evidence="1"/>
<dbReference type="EMBL" id="X95813">
    <property type="protein sequence ID" value="CAA65080.1"/>
    <property type="molecule type" value="Genomic_DNA"/>
</dbReference>
<dbReference type="SMR" id="P96178"/>
<dbReference type="GO" id="GO:0000428">
    <property type="term" value="C:DNA-directed RNA polymerase complex"/>
    <property type="evidence" value="ECO:0007669"/>
    <property type="project" value="UniProtKB-KW"/>
</dbReference>
<dbReference type="GO" id="GO:0003677">
    <property type="term" value="F:DNA binding"/>
    <property type="evidence" value="ECO:0007669"/>
    <property type="project" value="InterPro"/>
</dbReference>
<dbReference type="GO" id="GO:0003899">
    <property type="term" value="F:DNA-directed RNA polymerase activity"/>
    <property type="evidence" value="ECO:0007669"/>
    <property type="project" value="UniProtKB-EC"/>
</dbReference>
<dbReference type="GO" id="GO:0046872">
    <property type="term" value="F:metal ion binding"/>
    <property type="evidence" value="ECO:0007669"/>
    <property type="project" value="UniProtKB-KW"/>
</dbReference>
<dbReference type="GO" id="GO:0006351">
    <property type="term" value="P:DNA-templated transcription"/>
    <property type="evidence" value="ECO:0007669"/>
    <property type="project" value="InterPro"/>
</dbReference>
<dbReference type="CDD" id="cd02655">
    <property type="entry name" value="RNAP_beta'_C"/>
    <property type="match status" value="1"/>
</dbReference>
<dbReference type="CDD" id="cd01609">
    <property type="entry name" value="RNAP_beta'_N"/>
    <property type="match status" value="1"/>
</dbReference>
<dbReference type="Gene3D" id="1.10.132.30">
    <property type="match status" value="1"/>
</dbReference>
<dbReference type="Gene3D" id="1.10.1790.20">
    <property type="match status" value="1"/>
</dbReference>
<dbReference type="Gene3D" id="1.10.40.90">
    <property type="match status" value="1"/>
</dbReference>
<dbReference type="Gene3D" id="2.40.40.20">
    <property type="match status" value="1"/>
</dbReference>
<dbReference type="Gene3D" id="2.40.50.100">
    <property type="match status" value="1"/>
</dbReference>
<dbReference type="Gene3D" id="4.10.860.120">
    <property type="entry name" value="RNA polymerase II, clamp domain"/>
    <property type="match status" value="1"/>
</dbReference>
<dbReference type="Gene3D" id="1.10.274.100">
    <property type="entry name" value="RNA polymerase Rpb1, domain 3"/>
    <property type="match status" value="1"/>
</dbReference>
<dbReference type="HAMAP" id="MF_01322">
    <property type="entry name" value="RNApol_bact_RpoC"/>
    <property type="match status" value="1"/>
</dbReference>
<dbReference type="InterPro" id="IPR045867">
    <property type="entry name" value="DNA-dir_RpoC_beta_prime"/>
</dbReference>
<dbReference type="InterPro" id="IPR012754">
    <property type="entry name" value="DNA-dir_RpoC_beta_prime_bact"/>
</dbReference>
<dbReference type="InterPro" id="IPR000722">
    <property type="entry name" value="RNA_pol_asu"/>
</dbReference>
<dbReference type="InterPro" id="IPR006592">
    <property type="entry name" value="RNA_pol_N"/>
</dbReference>
<dbReference type="InterPro" id="IPR007080">
    <property type="entry name" value="RNA_pol_Rpb1_1"/>
</dbReference>
<dbReference type="InterPro" id="IPR007066">
    <property type="entry name" value="RNA_pol_Rpb1_3"/>
</dbReference>
<dbReference type="InterPro" id="IPR042102">
    <property type="entry name" value="RNA_pol_Rpb1_3_sf"/>
</dbReference>
<dbReference type="InterPro" id="IPR007083">
    <property type="entry name" value="RNA_pol_Rpb1_4"/>
</dbReference>
<dbReference type="InterPro" id="IPR007081">
    <property type="entry name" value="RNA_pol_Rpb1_5"/>
</dbReference>
<dbReference type="InterPro" id="IPR044893">
    <property type="entry name" value="RNA_pol_Rpb1_clamp_domain"/>
</dbReference>
<dbReference type="InterPro" id="IPR038120">
    <property type="entry name" value="Rpb1_funnel_sf"/>
</dbReference>
<dbReference type="NCBIfam" id="TIGR02386">
    <property type="entry name" value="rpoC_TIGR"/>
    <property type="match status" value="1"/>
</dbReference>
<dbReference type="PANTHER" id="PTHR19376">
    <property type="entry name" value="DNA-DIRECTED RNA POLYMERASE"/>
    <property type="match status" value="1"/>
</dbReference>
<dbReference type="PANTHER" id="PTHR19376:SF54">
    <property type="entry name" value="DNA-DIRECTED RNA POLYMERASE SUBUNIT BETA"/>
    <property type="match status" value="1"/>
</dbReference>
<dbReference type="Pfam" id="PF04997">
    <property type="entry name" value="RNA_pol_Rpb1_1"/>
    <property type="match status" value="1"/>
</dbReference>
<dbReference type="Pfam" id="PF00623">
    <property type="entry name" value="RNA_pol_Rpb1_2"/>
    <property type="match status" value="1"/>
</dbReference>
<dbReference type="Pfam" id="PF04983">
    <property type="entry name" value="RNA_pol_Rpb1_3"/>
    <property type="match status" value="1"/>
</dbReference>
<dbReference type="Pfam" id="PF05000">
    <property type="entry name" value="RNA_pol_Rpb1_4"/>
    <property type="match status" value="1"/>
</dbReference>
<dbReference type="Pfam" id="PF04998">
    <property type="entry name" value="RNA_pol_Rpb1_5"/>
    <property type="match status" value="1"/>
</dbReference>
<dbReference type="SMART" id="SM00663">
    <property type="entry name" value="RPOLA_N"/>
    <property type="match status" value="1"/>
</dbReference>
<dbReference type="SUPFAM" id="SSF64484">
    <property type="entry name" value="beta and beta-prime subunits of DNA dependent RNA-polymerase"/>
    <property type="match status" value="1"/>
</dbReference>